<name>CIN8_YEAST</name>
<proteinExistence type="evidence at protein level"/>
<reference key="1">
    <citation type="journal article" date="1992" name="J. Cell Biol.">
        <title>Two Saccharomyces cerevisiae kinesin-related gene products required for mitotic spindle assembly.</title>
        <authorList>
            <person name="Hoyt M.A."/>
            <person name="He L."/>
            <person name="Loo K.K."/>
            <person name="Saunders W.S."/>
        </authorList>
    </citation>
    <scope>NUCLEOTIDE SEQUENCE [GENOMIC DNA]</scope>
    <scope>FUNCTION</scope>
    <scope>SUBCELLULAR LOCATION</scope>
    <source>
        <strain>ATCC 204508 / S288c</strain>
    </source>
</reference>
<reference key="2">
    <citation type="journal article" date="1997" name="Nature">
        <title>The nucleotide sequence of Saccharomyces cerevisiae chromosome V.</title>
        <authorList>
            <person name="Dietrich F.S."/>
            <person name="Mulligan J.T."/>
            <person name="Hennessy K.M."/>
            <person name="Yelton M.A."/>
            <person name="Allen E."/>
            <person name="Araujo R."/>
            <person name="Aviles E."/>
            <person name="Berno A."/>
            <person name="Brennan T."/>
            <person name="Carpenter J."/>
            <person name="Chen E."/>
            <person name="Cherry J.M."/>
            <person name="Chung E."/>
            <person name="Duncan M."/>
            <person name="Guzman E."/>
            <person name="Hartzell G."/>
            <person name="Hunicke-Smith S."/>
            <person name="Hyman R.W."/>
            <person name="Kayser A."/>
            <person name="Komp C."/>
            <person name="Lashkari D."/>
            <person name="Lew H."/>
            <person name="Lin D."/>
            <person name="Mosedale D."/>
            <person name="Nakahara K."/>
            <person name="Namath A."/>
            <person name="Norgren R."/>
            <person name="Oefner P."/>
            <person name="Oh C."/>
            <person name="Petel F.X."/>
            <person name="Roberts D."/>
            <person name="Sehl P."/>
            <person name="Schramm S."/>
            <person name="Shogren T."/>
            <person name="Smith V."/>
            <person name="Taylor P."/>
            <person name="Wei Y."/>
            <person name="Botstein D."/>
            <person name="Davis R.W."/>
        </authorList>
    </citation>
    <scope>NUCLEOTIDE SEQUENCE [LARGE SCALE GENOMIC DNA]</scope>
    <source>
        <strain>ATCC 204508 / S288c</strain>
    </source>
</reference>
<reference key="3">
    <citation type="journal article" date="2014" name="G3 (Bethesda)">
        <title>The reference genome sequence of Saccharomyces cerevisiae: Then and now.</title>
        <authorList>
            <person name="Engel S.R."/>
            <person name="Dietrich F.S."/>
            <person name="Fisk D.G."/>
            <person name="Binkley G."/>
            <person name="Balakrishnan R."/>
            <person name="Costanzo M.C."/>
            <person name="Dwight S.S."/>
            <person name="Hitz B.C."/>
            <person name="Karra K."/>
            <person name="Nash R.S."/>
            <person name="Weng S."/>
            <person name="Wong E.D."/>
            <person name="Lloyd P."/>
            <person name="Skrzypek M.S."/>
            <person name="Miyasato S.R."/>
            <person name="Simison M."/>
            <person name="Cherry J.M."/>
        </authorList>
    </citation>
    <scope>GENOME REANNOTATION</scope>
    <source>
        <strain>ATCC 204508 / S288c</strain>
    </source>
</reference>
<reference key="4">
    <citation type="journal article" date="1995" name="FEBS Lett.">
        <title>A second nitrogen permease regulator in Saccharomyces cerevisiae.</title>
        <authorList>
            <person name="Rousselet G."/>
            <person name="Simon M."/>
            <person name="Ripoche P."/>
            <person name="Buhler J.-M."/>
        </authorList>
    </citation>
    <scope>NUCLEOTIDE SEQUENCE [GENOMIC DNA] OF 983-1000</scope>
    <source>
        <strain>ATCC 204508 / S288c</strain>
    </source>
</reference>
<reference key="5">
    <citation type="journal article" date="1992" name="Cell">
        <title>Kinesin-related proteins required for structural integrity of the mitotic spindle.</title>
        <authorList>
            <person name="Saunders W.S."/>
            <person name="Hoyt M.A."/>
        </authorList>
    </citation>
    <scope>FUNCTION</scope>
    <source>
        <strain>ATCC 204508 / S288c</strain>
    </source>
</reference>
<reference key="6">
    <citation type="journal article" date="2003" name="Nature">
        <title>Sequencing and comparison of yeast species to identify genes and regulatory elements.</title>
        <authorList>
            <person name="Kellis M."/>
            <person name="Patterson N."/>
            <person name="Endrizzi M."/>
            <person name="Birren B.W."/>
            <person name="Lander E.S."/>
        </authorList>
    </citation>
    <scope>IDENTIFICATION OF PROBABLE INITIATION SITE</scope>
</reference>
<reference key="7">
    <citation type="journal article" date="2003" name="Nature">
        <title>Global analysis of protein localization in budding yeast.</title>
        <authorList>
            <person name="Huh W.-K."/>
            <person name="Falvo J.V."/>
            <person name="Gerke L.C."/>
            <person name="Carroll A.S."/>
            <person name="Howson R.W."/>
            <person name="Weissman J.S."/>
            <person name="O'Shea E.K."/>
        </authorList>
    </citation>
    <scope>SUBCELLULAR LOCATION [LARGE SCALE ANALYSIS]</scope>
</reference>
<reference key="8">
    <citation type="journal article" date="2003" name="Nature">
        <title>Global analysis of protein expression in yeast.</title>
        <authorList>
            <person name="Ghaemmaghami S."/>
            <person name="Huh W.-K."/>
            <person name="Bower K."/>
            <person name="Howson R.W."/>
            <person name="Belle A."/>
            <person name="Dephoure N."/>
            <person name="O'Shea E.K."/>
            <person name="Weissman J.S."/>
        </authorList>
    </citation>
    <scope>LEVEL OF PROTEIN EXPRESSION [LARGE SCALE ANALYSIS]</scope>
</reference>
<reference key="9">
    <citation type="journal article" date="2003" name="Proc. Natl. Acad. Sci. U.S.A.">
        <title>The proteome of Saccharomyces cerevisiae mitochondria.</title>
        <authorList>
            <person name="Sickmann A."/>
            <person name="Reinders J."/>
            <person name="Wagner Y."/>
            <person name="Joppich C."/>
            <person name="Zahedi R.P."/>
            <person name="Meyer H.E."/>
            <person name="Schoenfisch B."/>
            <person name="Perschil I."/>
            <person name="Chacinska A."/>
            <person name="Guiard B."/>
            <person name="Rehling P."/>
            <person name="Pfanner N."/>
            <person name="Meisinger C."/>
        </authorList>
    </citation>
    <scope>SUBCELLULAR LOCATION [LARGE SCALE ANALYSIS]</scope>
    <source>
        <strain>ATCC 76625 / YPH499</strain>
    </source>
</reference>
<reference key="10">
    <citation type="journal article" date="2008" name="Mol. Cell. Proteomics">
        <title>A multidimensional chromatography technology for in-depth phosphoproteome analysis.</title>
        <authorList>
            <person name="Albuquerque C.P."/>
            <person name="Smolka M.B."/>
            <person name="Payne S.H."/>
            <person name="Bafna V."/>
            <person name="Eng J."/>
            <person name="Zhou H."/>
        </authorList>
    </citation>
    <scope>PHOSPHORYLATION [LARGE SCALE ANALYSIS] AT SER-972</scope>
    <scope>IDENTIFICATION BY MASS SPECTROMETRY [LARGE SCALE ANALYSIS]</scope>
</reference>
<reference key="11">
    <citation type="journal article" date="2012" name="Proc. Natl. Acad. Sci. U.S.A.">
        <title>N-terminal acetylome analyses and functional insights of the N-terminal acetyltransferase NatB.</title>
        <authorList>
            <person name="Van Damme P."/>
            <person name="Lasa M."/>
            <person name="Polevoda B."/>
            <person name="Gazquez C."/>
            <person name="Elosegui-Artola A."/>
            <person name="Kim D.S."/>
            <person name="De Juan-Pardo E."/>
            <person name="Demeyer K."/>
            <person name="Hole K."/>
            <person name="Larrea E."/>
            <person name="Timmerman E."/>
            <person name="Prieto J."/>
            <person name="Arnesen T."/>
            <person name="Sherman F."/>
            <person name="Gevaert K."/>
            <person name="Aldabe R."/>
        </authorList>
    </citation>
    <scope>IDENTIFICATION BY MASS SPECTROMETRY [LARGE SCALE ANALYSIS]</scope>
</reference>
<reference key="12">
    <citation type="journal article" date="2014" name="Dev. Cell">
        <title>Minus-end-directed Kinesin-14 motors align antiparallel microtubules to control metaphase spindle length.</title>
        <authorList>
            <person name="Hepperla A.J."/>
            <person name="Willey P.T."/>
            <person name="Coombes C.E."/>
            <person name="Schuster B.M."/>
            <person name="Gerami-Nejad M."/>
            <person name="McClellan M."/>
            <person name="Mukherjee S."/>
            <person name="Fox J."/>
            <person name="Winey M."/>
            <person name="Odde D.J."/>
            <person name="O'Toole E."/>
            <person name="Gardner M.K."/>
        </authorList>
    </citation>
    <scope>FUNCTION</scope>
    <scope>SUBCELLULAR LOCATION</scope>
</reference>
<accession>P27895</accession>
<accession>D3DLI9</accession>
<organism>
    <name type="scientific">Saccharomyces cerevisiae (strain ATCC 204508 / S288c)</name>
    <name type="common">Baker's yeast</name>
    <dbReference type="NCBI Taxonomy" id="559292"/>
    <lineage>
        <taxon>Eukaryota</taxon>
        <taxon>Fungi</taxon>
        <taxon>Dikarya</taxon>
        <taxon>Ascomycota</taxon>
        <taxon>Saccharomycotina</taxon>
        <taxon>Saccharomycetes</taxon>
        <taxon>Saccharomycetales</taxon>
        <taxon>Saccharomycetaceae</taxon>
        <taxon>Saccharomyces</taxon>
    </lineage>
</organism>
<comment type="function">
    <text evidence="6 7 8">Elongates the mitotic spindle by interacting with spindle microtubules to generate an outward force pushing spindle poles apart (PubMed:1618897, PubMed:1643659, PubMed:25313961). Following spindle assembly, CIN8 and KIP1 apparently act to oppose a force, possibly generated by KAR3, that draws separated poles back together (PubMed:1618897, PubMed:1643659).</text>
</comment>
<comment type="subcellular location">
    <subcellularLocation>
        <location evidence="6 8">Cytoplasm</location>
        <location evidence="6 8">Cytoskeleton</location>
        <location evidence="6 8">Spindle</location>
    </subcellularLocation>
    <subcellularLocation>
        <location evidence="5">Mitochondrion</location>
    </subcellularLocation>
    <text evidence="6">Spindle microtubules that lie between the poles.</text>
</comment>
<comment type="miscellaneous">
    <text evidence="4">Present with 238 molecules/cell in log phase SD medium.</text>
</comment>
<comment type="similarity">
    <text evidence="2">Belongs to the TRAFAC class myosin-kinesin ATPase superfamily. Kinesin family. BimC subfamily.</text>
</comment>
<comment type="sequence caution" evidence="9">
    <conflict type="erroneous initiation">
        <sequence resource="EMBL-CDS" id="AAA34496"/>
    </conflict>
</comment>
<comment type="sequence caution" evidence="9">
    <conflict type="erroneous initiation">
        <sequence resource="EMBL-CDS" id="AAB65026"/>
    </conflict>
</comment>
<comment type="sequence caution" evidence="9">
    <conflict type="erroneous initiation">
        <sequence resource="EMBL-CDS" id="CAA77885"/>
    </conflict>
</comment>
<evidence type="ECO:0000255" key="1"/>
<evidence type="ECO:0000255" key="2">
    <source>
        <dbReference type="PROSITE-ProRule" id="PRU00283"/>
    </source>
</evidence>
<evidence type="ECO:0000256" key="3">
    <source>
        <dbReference type="SAM" id="MobiDB-lite"/>
    </source>
</evidence>
<evidence type="ECO:0000269" key="4">
    <source>
    </source>
</evidence>
<evidence type="ECO:0000269" key="5">
    <source>
    </source>
</evidence>
<evidence type="ECO:0000269" key="6">
    <source>
    </source>
</evidence>
<evidence type="ECO:0000269" key="7">
    <source>
    </source>
</evidence>
<evidence type="ECO:0000269" key="8">
    <source>
    </source>
</evidence>
<evidence type="ECO:0000305" key="9"/>
<evidence type="ECO:0007744" key="10">
    <source>
    </source>
</evidence>
<protein>
    <recommendedName>
        <fullName>Kinesin-like protein CIN8</fullName>
    </recommendedName>
    <alternativeName>
        <fullName>Chromosome instability protein 8</fullName>
    </alternativeName>
</protein>
<feature type="chain" id="PRO_0000125367" description="Kinesin-like protein CIN8">
    <location>
        <begin position="1"/>
        <end position="1000"/>
    </location>
</feature>
<feature type="domain" description="Kinesin motor" evidence="2">
    <location>
        <begin position="36"/>
        <end position="477"/>
    </location>
</feature>
<feature type="region of interest" description="Disordered" evidence="3">
    <location>
        <begin position="1"/>
        <end position="28"/>
    </location>
</feature>
<feature type="region of interest" description="Disordered" evidence="3">
    <location>
        <begin position="220"/>
        <end position="248"/>
    </location>
</feature>
<feature type="region of interest" description="Disordered" evidence="3">
    <location>
        <begin position="260"/>
        <end position="312"/>
    </location>
</feature>
<feature type="region of interest" description="Disordered" evidence="3">
    <location>
        <begin position="970"/>
        <end position="1000"/>
    </location>
</feature>
<feature type="coiled-coil region" evidence="1">
    <location>
        <begin position="518"/>
        <end position="615"/>
    </location>
</feature>
<feature type="coiled-coil region" evidence="1">
    <location>
        <begin position="860"/>
        <end position="904"/>
    </location>
</feature>
<feature type="compositionally biased region" description="Polar residues" evidence="3">
    <location>
        <begin position="1"/>
        <end position="26"/>
    </location>
</feature>
<feature type="compositionally biased region" description="Low complexity" evidence="3">
    <location>
        <begin position="220"/>
        <end position="242"/>
    </location>
</feature>
<feature type="compositionally biased region" description="Polar residues" evidence="3">
    <location>
        <begin position="261"/>
        <end position="276"/>
    </location>
</feature>
<feature type="compositionally biased region" description="Low complexity" evidence="3">
    <location>
        <begin position="277"/>
        <end position="301"/>
    </location>
</feature>
<feature type="compositionally biased region" description="Polar residues" evidence="3">
    <location>
        <begin position="302"/>
        <end position="312"/>
    </location>
</feature>
<feature type="compositionally biased region" description="Basic and acidic residues" evidence="3">
    <location>
        <begin position="976"/>
        <end position="1000"/>
    </location>
</feature>
<feature type="binding site" evidence="2">
    <location>
        <begin position="128"/>
        <end position="135"/>
    </location>
    <ligand>
        <name>ATP</name>
        <dbReference type="ChEBI" id="CHEBI:30616"/>
    </ligand>
</feature>
<feature type="modified residue" description="Phosphoserine" evidence="10">
    <location>
        <position position="972"/>
    </location>
</feature>
<feature type="sequence conflict" description="In Ref. 1; AAA34496/CAA77885." evidence="9" ref="1">
    <original>D</original>
    <variation>A</variation>
    <location>
        <position position="216"/>
    </location>
</feature>
<feature type="sequence conflict" description="In Ref. 1; AAA34496/CAA77885." evidence="9" ref="1">
    <original>Q</original>
    <variation>H</variation>
    <location>
        <position position="793"/>
    </location>
</feature>
<dbReference type="EMBL" id="M90522">
    <property type="protein sequence ID" value="AAA34496.1"/>
    <property type="status" value="ALT_INIT"/>
    <property type="molecule type" value="Genomic_DNA"/>
</dbReference>
<dbReference type="EMBL" id="Z11859">
    <property type="protein sequence ID" value="CAA77885.1"/>
    <property type="status" value="ALT_INIT"/>
    <property type="molecule type" value="Genomic_DNA"/>
</dbReference>
<dbReference type="EMBL" id="U18795">
    <property type="protein sequence ID" value="AAB65026.1"/>
    <property type="status" value="ALT_INIT"/>
    <property type="molecule type" value="Genomic_DNA"/>
</dbReference>
<dbReference type="EMBL" id="X79105">
    <property type="protein sequence ID" value="CAA55722.1"/>
    <property type="molecule type" value="Genomic_DNA"/>
</dbReference>
<dbReference type="EMBL" id="BK006939">
    <property type="protein sequence ID" value="DAA07593.1"/>
    <property type="molecule type" value="Genomic_DNA"/>
</dbReference>
<dbReference type="PIR" id="S50528">
    <property type="entry name" value="B42641"/>
</dbReference>
<dbReference type="RefSeq" id="NP_010853.2">
    <property type="nucleotide sequence ID" value="NM_001178876.1"/>
</dbReference>
<dbReference type="SMR" id="P27895"/>
<dbReference type="BioGRID" id="36668">
    <property type="interactions" value="345"/>
</dbReference>
<dbReference type="DIP" id="DIP-3004N"/>
<dbReference type="ELM" id="P27895"/>
<dbReference type="FunCoup" id="P27895">
    <property type="interactions" value="153"/>
</dbReference>
<dbReference type="IntAct" id="P27895">
    <property type="interactions" value="15"/>
</dbReference>
<dbReference type="MINT" id="P27895"/>
<dbReference type="STRING" id="4932.YEL061C"/>
<dbReference type="CarbonylDB" id="P27895"/>
<dbReference type="iPTMnet" id="P27895"/>
<dbReference type="PaxDb" id="4932-YEL061C"/>
<dbReference type="PeptideAtlas" id="P27895"/>
<dbReference type="EnsemblFungi" id="YEL061C_mRNA">
    <property type="protein sequence ID" value="YEL061C"/>
    <property type="gene ID" value="YEL061C"/>
</dbReference>
<dbReference type="GeneID" id="856648"/>
<dbReference type="KEGG" id="sce:YEL061C"/>
<dbReference type="AGR" id="SGD:S000000787"/>
<dbReference type="SGD" id="S000000787">
    <property type="gene designation" value="CIN8"/>
</dbReference>
<dbReference type="VEuPathDB" id="FungiDB:YEL061C"/>
<dbReference type="eggNOG" id="KOG0243">
    <property type="taxonomic scope" value="Eukaryota"/>
</dbReference>
<dbReference type="GeneTree" id="ENSGT00940000155921"/>
<dbReference type="HOGENOM" id="CLU_001485_33_3_1"/>
<dbReference type="InParanoid" id="P27895"/>
<dbReference type="OMA" id="EVQECKR"/>
<dbReference type="OrthoDB" id="3176171at2759"/>
<dbReference type="BioCyc" id="YEAST:G3O-30176-MONOMER"/>
<dbReference type="Reactome" id="R-SCE-983189">
    <property type="pathway name" value="Kinesins"/>
</dbReference>
<dbReference type="BioGRID-ORCS" id="856648">
    <property type="hits" value="1 hit in 10 CRISPR screens"/>
</dbReference>
<dbReference type="PRO" id="PR:P27895"/>
<dbReference type="Proteomes" id="UP000002311">
    <property type="component" value="Chromosome V"/>
</dbReference>
<dbReference type="RNAct" id="P27895">
    <property type="molecule type" value="protein"/>
</dbReference>
<dbReference type="GO" id="GO:0000235">
    <property type="term" value="C:astral microtubule"/>
    <property type="evidence" value="ECO:0000315"/>
    <property type="project" value="SGD"/>
</dbReference>
<dbReference type="GO" id="GO:0000776">
    <property type="term" value="C:kinetochore"/>
    <property type="evidence" value="ECO:0000314"/>
    <property type="project" value="SGD"/>
</dbReference>
<dbReference type="GO" id="GO:0005828">
    <property type="term" value="C:kinetochore microtubule"/>
    <property type="evidence" value="ECO:0000314"/>
    <property type="project" value="SGD"/>
</dbReference>
<dbReference type="GO" id="GO:0005739">
    <property type="term" value="C:mitochondrion"/>
    <property type="evidence" value="ECO:0007005"/>
    <property type="project" value="SGD"/>
</dbReference>
<dbReference type="GO" id="GO:0072686">
    <property type="term" value="C:mitotic spindle"/>
    <property type="evidence" value="ECO:0000318"/>
    <property type="project" value="GO_Central"/>
</dbReference>
<dbReference type="GO" id="GO:0005634">
    <property type="term" value="C:nucleus"/>
    <property type="evidence" value="ECO:0000318"/>
    <property type="project" value="GO_Central"/>
</dbReference>
<dbReference type="GO" id="GO:0005876">
    <property type="term" value="C:spindle microtubule"/>
    <property type="evidence" value="ECO:0000314"/>
    <property type="project" value="SGD"/>
</dbReference>
<dbReference type="GO" id="GO:0005524">
    <property type="term" value="F:ATP binding"/>
    <property type="evidence" value="ECO:0007669"/>
    <property type="project" value="UniProtKB-KW"/>
</dbReference>
<dbReference type="GO" id="GO:0008017">
    <property type="term" value="F:microtubule binding"/>
    <property type="evidence" value="ECO:0007669"/>
    <property type="project" value="InterPro"/>
</dbReference>
<dbReference type="GO" id="GO:0003777">
    <property type="term" value="F:microtubule motor activity"/>
    <property type="evidence" value="ECO:0000316"/>
    <property type="project" value="SGD"/>
</dbReference>
<dbReference type="GO" id="GO:0008569">
    <property type="term" value="F:minus-end-directed microtubule motor activity"/>
    <property type="evidence" value="ECO:0000314"/>
    <property type="project" value="SGD"/>
</dbReference>
<dbReference type="GO" id="GO:0008574">
    <property type="term" value="F:plus-end-directed microtubule motor activity"/>
    <property type="evidence" value="ECO:0000314"/>
    <property type="project" value="SGD"/>
</dbReference>
<dbReference type="GO" id="GO:0051301">
    <property type="term" value="P:cell division"/>
    <property type="evidence" value="ECO:0007669"/>
    <property type="project" value="UniProtKB-KW"/>
</dbReference>
<dbReference type="GO" id="GO:0000073">
    <property type="term" value="P:initial mitotic spindle pole body separation"/>
    <property type="evidence" value="ECO:0000315"/>
    <property type="project" value="SGD"/>
</dbReference>
<dbReference type="GO" id="GO:0045144">
    <property type="term" value="P:meiotic sister chromatid segregation"/>
    <property type="evidence" value="ECO:0000315"/>
    <property type="project" value="SGD"/>
</dbReference>
<dbReference type="GO" id="GO:0007019">
    <property type="term" value="P:microtubule depolymerization"/>
    <property type="evidence" value="ECO:0000315"/>
    <property type="project" value="SGD"/>
</dbReference>
<dbReference type="GO" id="GO:0007018">
    <property type="term" value="P:microtubule-based movement"/>
    <property type="evidence" value="ECO:0007669"/>
    <property type="project" value="InterPro"/>
</dbReference>
<dbReference type="GO" id="GO:0000070">
    <property type="term" value="P:mitotic sister chromatid segregation"/>
    <property type="evidence" value="ECO:0000316"/>
    <property type="project" value="SGD"/>
</dbReference>
<dbReference type="GO" id="GO:0090307">
    <property type="term" value="P:mitotic spindle assembly"/>
    <property type="evidence" value="ECO:0000315"/>
    <property type="project" value="SGD"/>
</dbReference>
<dbReference type="GO" id="GO:0000022">
    <property type="term" value="P:mitotic spindle elongation"/>
    <property type="evidence" value="ECO:0000315"/>
    <property type="project" value="SGD"/>
</dbReference>
<dbReference type="GO" id="GO:0061805">
    <property type="term" value="P:mitotic spindle elongation (spindle phase three)"/>
    <property type="evidence" value="ECO:0000315"/>
    <property type="project" value="UniProtKB"/>
</dbReference>
<dbReference type="GO" id="GO:0033047">
    <property type="term" value="P:regulation of mitotic sister chromatid segregation"/>
    <property type="evidence" value="ECO:0000314"/>
    <property type="project" value="SGD"/>
</dbReference>
<dbReference type="GO" id="GO:0051231">
    <property type="term" value="P:spindle elongation"/>
    <property type="evidence" value="ECO:0000318"/>
    <property type="project" value="GO_Central"/>
</dbReference>
<dbReference type="CDD" id="cd01364">
    <property type="entry name" value="KISc_BimC_Eg5"/>
    <property type="match status" value="1"/>
</dbReference>
<dbReference type="Gene3D" id="3.40.850.10">
    <property type="entry name" value="Kinesin motor domain"/>
    <property type="match status" value="1"/>
</dbReference>
<dbReference type="InterPro" id="IPR047149">
    <property type="entry name" value="KIF11-like"/>
</dbReference>
<dbReference type="InterPro" id="IPR047241">
    <property type="entry name" value="KIF11-like_kin_motor_dom"/>
</dbReference>
<dbReference type="InterPro" id="IPR019821">
    <property type="entry name" value="Kinesin_motor_CS"/>
</dbReference>
<dbReference type="InterPro" id="IPR001752">
    <property type="entry name" value="Kinesin_motor_dom"/>
</dbReference>
<dbReference type="InterPro" id="IPR036961">
    <property type="entry name" value="Kinesin_motor_dom_sf"/>
</dbReference>
<dbReference type="InterPro" id="IPR027417">
    <property type="entry name" value="P-loop_NTPase"/>
</dbReference>
<dbReference type="PANTHER" id="PTHR47970:SF12">
    <property type="entry name" value="KINESIN FAMILY MEMBER 11"/>
    <property type="match status" value="1"/>
</dbReference>
<dbReference type="PANTHER" id="PTHR47970">
    <property type="entry name" value="KINESIN-LIKE PROTEIN KIF11"/>
    <property type="match status" value="1"/>
</dbReference>
<dbReference type="Pfam" id="PF00225">
    <property type="entry name" value="Kinesin"/>
    <property type="match status" value="2"/>
</dbReference>
<dbReference type="PRINTS" id="PR00380">
    <property type="entry name" value="KINESINHEAVY"/>
</dbReference>
<dbReference type="SMART" id="SM00129">
    <property type="entry name" value="KISc"/>
    <property type="match status" value="1"/>
</dbReference>
<dbReference type="SUPFAM" id="SSF52540">
    <property type="entry name" value="P-loop containing nucleoside triphosphate hydrolases"/>
    <property type="match status" value="1"/>
</dbReference>
<dbReference type="PROSITE" id="PS00411">
    <property type="entry name" value="KINESIN_MOTOR_1"/>
    <property type="match status" value="1"/>
</dbReference>
<dbReference type="PROSITE" id="PS50067">
    <property type="entry name" value="KINESIN_MOTOR_2"/>
    <property type="match status" value="1"/>
</dbReference>
<gene>
    <name type="primary">CIN8</name>
    <name type="synonym">KSL2</name>
    <name type="ordered locus">YEL061C</name>
</gene>
<keyword id="KW-0067">ATP-binding</keyword>
<keyword id="KW-0131">Cell cycle</keyword>
<keyword id="KW-0132">Cell division</keyword>
<keyword id="KW-0175">Coiled coil</keyword>
<keyword id="KW-0963">Cytoplasm</keyword>
<keyword id="KW-0206">Cytoskeleton</keyword>
<keyword id="KW-0493">Microtubule</keyword>
<keyword id="KW-0496">Mitochondrion</keyword>
<keyword id="KW-0498">Mitosis</keyword>
<keyword id="KW-0505">Motor protein</keyword>
<keyword id="KW-0547">Nucleotide-binding</keyword>
<keyword id="KW-0597">Phosphoprotein</keyword>
<keyword id="KW-1185">Reference proteome</keyword>
<sequence length="1000" mass="113311">MPAENQNTGQDRSSNSISKNGNSQVGCHTVPNEELNITVAVRCRGRNEREISMKSSVVVNVPDITGSKEISINTTGDTGITAQMNAKRYTVDKVFGPGASQDLIFDEVAGPLFQDFIKGYNCTVLVYGMTSTGKTYTMTGDEKLYNGELSDAAGIIPRVLLKLFDTLELQQNDYVVKCSFIELYNEELKDLLDSNSNGSSNTGFDGQFMKKLRIFDSSTANNTTSNSASSSRSNSRNSSPRSLNDLTPKAALLRKRLRTKSLPNTIKQQYQQQQAVNSRNNSSSNSGSTTNNASSNTNTNNGQRSSMAPNDQTNGIYIQNLQEFHITNAMEGLNLLQKGLKHRQVASTKMNDFSSRSHTIFTITLYKKHQDELFRISKMNLVDLAGSENINRSGALNQRAKEAGSINQSLLTLGRVINALVDKSGHIPFRESKLTRLLQDSLGGNTKTALIATISPAKVTSEETCSTLEYASKAKNIKNKPQLGSFIMKDILVKNITMELAKIKSDLLSTKSKEGIYMSQDHYKNLNSDLESYKNEVQECKREIESLTSKNALLVKDKLKSKETIQSQNCQIESLKTTIDHLRAQLDKQHKTEIEISDFNNKLQKLTEVMQMALHDYKKRELDLNQKFEMHITKEIKKLKSTLFLQLNTMQQESILQETNIQPNLDMIKNEVLTLMRTMQEKAELMYKDCVKKILNESPKFFNVVIEKIDIIRVDFQKFYKNIAENLSDISEENNNMKQYLKNHFFKNNHQELLNRHVDSTYENIEKRTNEFVENFKKVLNDHLDENKKLIMQNLTTATSAVIDQEMDLFEPKRVKWENSFDLINDCDSMNNEFYNSMAATLSQIKSTVDTSSNSMNESISVMKGQVEESENAISLLKNNTKFNDQFEQLINKHNMLKDNIKNSITSTHSHITNVDDIYNTIENIMKNYGNKENATKDEMIENILKEIPNLSKKMPLRLSNINSNSVQSVISPKKHAIEDENKSSENVDNEGSRKMLKIE</sequence>